<sequence>MPLSKEQKQEVMEKYKLHEHDTGSPEVQIAILTEKIKQLNEHLKTHQQDHASRRGLLKMVGKRRGLLNYLKSNSADRYLELIKKLGLRK</sequence>
<keyword id="KW-1185">Reference proteome</keyword>
<keyword id="KW-0687">Ribonucleoprotein</keyword>
<keyword id="KW-0689">Ribosomal protein</keyword>
<keyword id="KW-0694">RNA-binding</keyword>
<keyword id="KW-0699">rRNA-binding</keyword>
<reference key="1">
    <citation type="submission" date="2008-04" db="EMBL/GenBank/DDBJ databases">
        <title>Complete sequence of chromosome of Natranaerobius thermophilus JW/NM-WN-LF.</title>
        <authorList>
            <consortium name="US DOE Joint Genome Institute"/>
            <person name="Copeland A."/>
            <person name="Lucas S."/>
            <person name="Lapidus A."/>
            <person name="Glavina del Rio T."/>
            <person name="Dalin E."/>
            <person name="Tice H."/>
            <person name="Bruce D."/>
            <person name="Goodwin L."/>
            <person name="Pitluck S."/>
            <person name="Chertkov O."/>
            <person name="Brettin T."/>
            <person name="Detter J.C."/>
            <person name="Han C."/>
            <person name="Kuske C.R."/>
            <person name="Schmutz J."/>
            <person name="Larimer F."/>
            <person name="Land M."/>
            <person name="Hauser L."/>
            <person name="Kyrpides N."/>
            <person name="Lykidis A."/>
            <person name="Mesbah N.M."/>
            <person name="Wiegel J."/>
        </authorList>
    </citation>
    <scope>NUCLEOTIDE SEQUENCE [LARGE SCALE GENOMIC DNA]</scope>
    <source>
        <strain>ATCC BAA-1301 / DSM 18059 / JW/NM-WN-LF</strain>
    </source>
</reference>
<comment type="function">
    <text evidence="1">One of the primary rRNA binding proteins, it binds directly to 16S rRNA where it helps nucleate assembly of the platform of the 30S subunit by binding and bridging several RNA helices of the 16S rRNA.</text>
</comment>
<comment type="function">
    <text evidence="1">Forms an intersubunit bridge (bridge B4) with the 23S rRNA of the 50S subunit in the ribosome.</text>
</comment>
<comment type="subunit">
    <text evidence="1">Part of the 30S ribosomal subunit. Forms a bridge to the 50S subunit in the 70S ribosome, contacting the 23S rRNA.</text>
</comment>
<comment type="similarity">
    <text evidence="1">Belongs to the universal ribosomal protein uS15 family.</text>
</comment>
<feature type="chain" id="PRO_1000143144" description="Small ribosomal subunit protein uS15">
    <location>
        <begin position="1"/>
        <end position="89"/>
    </location>
</feature>
<feature type="region of interest" description="Disordered" evidence="2">
    <location>
        <begin position="1"/>
        <end position="22"/>
    </location>
</feature>
<evidence type="ECO:0000255" key="1">
    <source>
        <dbReference type="HAMAP-Rule" id="MF_01343"/>
    </source>
</evidence>
<evidence type="ECO:0000256" key="2">
    <source>
        <dbReference type="SAM" id="MobiDB-lite"/>
    </source>
</evidence>
<evidence type="ECO:0000305" key="3"/>
<accession>B2A3A2</accession>
<proteinExistence type="inferred from homology"/>
<protein>
    <recommendedName>
        <fullName evidence="1">Small ribosomal subunit protein uS15</fullName>
    </recommendedName>
    <alternativeName>
        <fullName evidence="3">30S ribosomal protein S15</fullName>
    </alternativeName>
</protein>
<organism>
    <name type="scientific">Natranaerobius thermophilus (strain ATCC BAA-1301 / DSM 18059 / JW/NM-WN-LF)</name>
    <dbReference type="NCBI Taxonomy" id="457570"/>
    <lineage>
        <taxon>Bacteria</taxon>
        <taxon>Bacillati</taxon>
        <taxon>Bacillota</taxon>
        <taxon>Clostridia</taxon>
        <taxon>Natranaerobiales</taxon>
        <taxon>Natranaerobiaceae</taxon>
        <taxon>Natranaerobius</taxon>
    </lineage>
</organism>
<dbReference type="EMBL" id="CP001034">
    <property type="protein sequence ID" value="ACB85032.1"/>
    <property type="molecule type" value="Genomic_DNA"/>
</dbReference>
<dbReference type="RefSeq" id="WP_012447906.1">
    <property type="nucleotide sequence ID" value="NC_010718.1"/>
</dbReference>
<dbReference type="SMR" id="B2A3A2"/>
<dbReference type="FunCoup" id="B2A3A2">
    <property type="interactions" value="377"/>
</dbReference>
<dbReference type="STRING" id="457570.Nther_1449"/>
<dbReference type="KEGG" id="nth:Nther_1449"/>
<dbReference type="eggNOG" id="COG0184">
    <property type="taxonomic scope" value="Bacteria"/>
</dbReference>
<dbReference type="HOGENOM" id="CLU_148518_0_0_9"/>
<dbReference type="InParanoid" id="B2A3A2"/>
<dbReference type="OrthoDB" id="9799262at2"/>
<dbReference type="Proteomes" id="UP000001683">
    <property type="component" value="Chromosome"/>
</dbReference>
<dbReference type="GO" id="GO:0022627">
    <property type="term" value="C:cytosolic small ribosomal subunit"/>
    <property type="evidence" value="ECO:0007669"/>
    <property type="project" value="TreeGrafter"/>
</dbReference>
<dbReference type="GO" id="GO:0019843">
    <property type="term" value="F:rRNA binding"/>
    <property type="evidence" value="ECO:0007669"/>
    <property type="project" value="UniProtKB-UniRule"/>
</dbReference>
<dbReference type="GO" id="GO:0003735">
    <property type="term" value="F:structural constituent of ribosome"/>
    <property type="evidence" value="ECO:0007669"/>
    <property type="project" value="InterPro"/>
</dbReference>
<dbReference type="GO" id="GO:0006412">
    <property type="term" value="P:translation"/>
    <property type="evidence" value="ECO:0007669"/>
    <property type="project" value="UniProtKB-UniRule"/>
</dbReference>
<dbReference type="CDD" id="cd00353">
    <property type="entry name" value="Ribosomal_S15p_S13e"/>
    <property type="match status" value="1"/>
</dbReference>
<dbReference type="FunFam" id="1.10.287.10:FF:000002">
    <property type="entry name" value="30S ribosomal protein S15"/>
    <property type="match status" value="1"/>
</dbReference>
<dbReference type="Gene3D" id="6.10.250.3130">
    <property type="match status" value="1"/>
</dbReference>
<dbReference type="Gene3D" id="1.10.287.10">
    <property type="entry name" value="S15/NS1, RNA-binding"/>
    <property type="match status" value="1"/>
</dbReference>
<dbReference type="HAMAP" id="MF_01343_B">
    <property type="entry name" value="Ribosomal_uS15_B"/>
    <property type="match status" value="1"/>
</dbReference>
<dbReference type="InterPro" id="IPR000589">
    <property type="entry name" value="Ribosomal_uS15"/>
</dbReference>
<dbReference type="InterPro" id="IPR005290">
    <property type="entry name" value="Ribosomal_uS15_bac-type"/>
</dbReference>
<dbReference type="InterPro" id="IPR009068">
    <property type="entry name" value="uS15_NS1_RNA-bd_sf"/>
</dbReference>
<dbReference type="NCBIfam" id="TIGR00952">
    <property type="entry name" value="S15_bact"/>
    <property type="match status" value="1"/>
</dbReference>
<dbReference type="PANTHER" id="PTHR23321">
    <property type="entry name" value="RIBOSOMAL PROTEIN S15, BACTERIAL AND ORGANELLAR"/>
    <property type="match status" value="1"/>
</dbReference>
<dbReference type="PANTHER" id="PTHR23321:SF26">
    <property type="entry name" value="SMALL RIBOSOMAL SUBUNIT PROTEIN US15M"/>
    <property type="match status" value="1"/>
</dbReference>
<dbReference type="Pfam" id="PF00312">
    <property type="entry name" value="Ribosomal_S15"/>
    <property type="match status" value="1"/>
</dbReference>
<dbReference type="SMART" id="SM01387">
    <property type="entry name" value="Ribosomal_S15"/>
    <property type="match status" value="1"/>
</dbReference>
<dbReference type="SUPFAM" id="SSF47060">
    <property type="entry name" value="S15/NS1 RNA-binding domain"/>
    <property type="match status" value="1"/>
</dbReference>
<dbReference type="PROSITE" id="PS00362">
    <property type="entry name" value="RIBOSOMAL_S15"/>
    <property type="match status" value="1"/>
</dbReference>
<name>RS15_NATTJ</name>
<gene>
    <name evidence="1" type="primary">rpsO</name>
    <name type="ordered locus">Nther_1449</name>
</gene>